<protein>
    <recommendedName>
        <fullName>Mu-theraphotoxin-Hhn2j 4</fullName>
        <shortName>Mu-TRTX-Hhn2j</shortName>
    </recommendedName>
    <alternativeName>
        <fullName>Hainantoxin-III-2.5</fullName>
        <shortName>HNTX-III-2.5</shortName>
    </alternativeName>
</protein>
<reference key="1">
    <citation type="journal article" date="2010" name="J. Proteome Res.">
        <title>Molecular diversification of peptide toxins from the tarantula Haplopelma hainanum (Ornithoctonus hainana) venom based on transcriptomic, peptidomic, and genomic analyses.</title>
        <authorList>
            <person name="Tang X."/>
            <person name="Zhang Y."/>
            <person name="Hu W."/>
            <person name="Xu D."/>
            <person name="Tao H."/>
            <person name="Yang X."/>
            <person name="Li Y."/>
            <person name="Jiang L."/>
            <person name="Liang S."/>
        </authorList>
    </citation>
    <scope>NUCLEOTIDE SEQUENCE [LARGE SCALE MRNA]</scope>
    <source>
        <tissue>Venom gland</tissue>
    </source>
</reference>
<accession>D2Y1Z6</accession>
<comment type="function">
    <text evidence="1">Lethal neurotoxin. Selectively blocks tetrodotoxin-sensitive voltage-gated sodium channels (Nav). Does not affect tetrodotoxin-resistant voltage-gated sodium channels or calcium channels (By similarity).</text>
</comment>
<comment type="subunit">
    <text evidence="1">Monomer.</text>
</comment>
<comment type="subcellular location">
    <subcellularLocation>
        <location evidence="1">Secreted</location>
    </subcellularLocation>
</comment>
<comment type="tissue specificity">
    <text>Expressed by the venom gland.</text>
</comment>
<comment type="domain">
    <text evidence="1">The presence of a 'disulfide through disulfide knot' structurally defines this protein as a knottin.</text>
</comment>
<comment type="similarity">
    <text evidence="3">Belongs to the neurotoxin 10 (Hwtx-1) family. 15 (Hntx-3) subfamily.</text>
</comment>
<proteinExistence type="evidence at transcript level"/>
<name>H3B05_CYRHA</name>
<keyword id="KW-0027">Amidation</keyword>
<keyword id="KW-1015">Disulfide bond</keyword>
<keyword id="KW-0872">Ion channel impairing toxin</keyword>
<keyword id="KW-0960">Knottin</keyword>
<keyword id="KW-0528">Neurotoxin</keyword>
<keyword id="KW-0638">Presynaptic neurotoxin</keyword>
<keyword id="KW-0964">Secreted</keyword>
<keyword id="KW-0732">Signal</keyword>
<keyword id="KW-0800">Toxin</keyword>
<keyword id="KW-0738">Voltage-gated sodium channel impairing toxin</keyword>
<evidence type="ECO:0000250" key="1"/>
<evidence type="ECO:0000255" key="2"/>
<evidence type="ECO:0000305" key="3"/>
<sequence length="83" mass="9065">MKASMFLALAGLVLLFVVGYASESEEKEFPIELLSKIFAVDVFKGEGRGCKGFGDSCTPGKNECCPNHACSNKHKWCKVYLGK</sequence>
<feature type="signal peptide" evidence="2">
    <location>
        <begin position="1"/>
        <end position="21"/>
    </location>
</feature>
<feature type="propeptide" id="PRO_0000400536" evidence="1">
    <location>
        <begin position="22"/>
        <end position="48"/>
    </location>
</feature>
<feature type="peptide" id="PRO_0000400537" description="Mu-theraphotoxin-Hhn2j 4">
    <location>
        <begin position="49"/>
        <end position="81"/>
    </location>
</feature>
<feature type="modified residue" description="Leucine amide" evidence="1">
    <location>
        <position position="81"/>
    </location>
</feature>
<feature type="disulfide bond" evidence="1">
    <location>
        <begin position="50"/>
        <end position="65"/>
    </location>
</feature>
<feature type="disulfide bond" evidence="1">
    <location>
        <begin position="57"/>
        <end position="70"/>
    </location>
</feature>
<feature type="disulfide bond" evidence="1">
    <location>
        <begin position="64"/>
        <end position="77"/>
    </location>
</feature>
<dbReference type="EMBL" id="GU292873">
    <property type="protein sequence ID" value="ADB56689.1"/>
    <property type="molecule type" value="mRNA"/>
</dbReference>
<dbReference type="SMR" id="D2Y1Z6"/>
<dbReference type="ArachnoServer" id="AS001740">
    <property type="toxin name" value="mu-theraphotoxin-Hhn2j"/>
</dbReference>
<dbReference type="GO" id="GO:0005576">
    <property type="term" value="C:extracellular region"/>
    <property type="evidence" value="ECO:0007669"/>
    <property type="project" value="UniProtKB-SubCell"/>
</dbReference>
<dbReference type="GO" id="GO:0044231">
    <property type="term" value="C:host cell presynaptic membrane"/>
    <property type="evidence" value="ECO:0007669"/>
    <property type="project" value="UniProtKB-KW"/>
</dbReference>
<dbReference type="GO" id="GO:0008200">
    <property type="term" value="F:ion channel inhibitor activity"/>
    <property type="evidence" value="ECO:0007669"/>
    <property type="project" value="InterPro"/>
</dbReference>
<dbReference type="GO" id="GO:0017080">
    <property type="term" value="F:sodium channel regulator activity"/>
    <property type="evidence" value="ECO:0007669"/>
    <property type="project" value="UniProtKB-KW"/>
</dbReference>
<dbReference type="GO" id="GO:0090729">
    <property type="term" value="F:toxin activity"/>
    <property type="evidence" value="ECO:0007669"/>
    <property type="project" value="UniProtKB-KW"/>
</dbReference>
<dbReference type="InterPro" id="IPR011696">
    <property type="entry name" value="Huwentoxin-1"/>
</dbReference>
<dbReference type="InterPro" id="IPR013140">
    <property type="entry name" value="Huwentoxin_CS1"/>
</dbReference>
<dbReference type="Pfam" id="PF07740">
    <property type="entry name" value="Toxin_12"/>
    <property type="match status" value="1"/>
</dbReference>
<dbReference type="SUPFAM" id="SSF57059">
    <property type="entry name" value="omega toxin-like"/>
    <property type="match status" value="1"/>
</dbReference>
<dbReference type="PROSITE" id="PS60021">
    <property type="entry name" value="HWTX_1"/>
    <property type="match status" value="1"/>
</dbReference>
<organism>
    <name type="scientific">Cyriopagopus hainanus</name>
    <name type="common">Chinese bird spider</name>
    <name type="synonym">Haplopelma hainanum</name>
    <dbReference type="NCBI Taxonomy" id="209901"/>
    <lineage>
        <taxon>Eukaryota</taxon>
        <taxon>Metazoa</taxon>
        <taxon>Ecdysozoa</taxon>
        <taxon>Arthropoda</taxon>
        <taxon>Chelicerata</taxon>
        <taxon>Arachnida</taxon>
        <taxon>Araneae</taxon>
        <taxon>Mygalomorphae</taxon>
        <taxon>Theraphosidae</taxon>
        <taxon>Haplopelma</taxon>
    </lineage>
</organism>